<reference key="1">
    <citation type="journal article" date="2009" name="PLoS Genet.">
        <title>Organised genome dynamics in the Escherichia coli species results in highly diverse adaptive paths.</title>
        <authorList>
            <person name="Touchon M."/>
            <person name="Hoede C."/>
            <person name="Tenaillon O."/>
            <person name="Barbe V."/>
            <person name="Baeriswyl S."/>
            <person name="Bidet P."/>
            <person name="Bingen E."/>
            <person name="Bonacorsi S."/>
            <person name="Bouchier C."/>
            <person name="Bouvet O."/>
            <person name="Calteau A."/>
            <person name="Chiapello H."/>
            <person name="Clermont O."/>
            <person name="Cruveiller S."/>
            <person name="Danchin A."/>
            <person name="Diard M."/>
            <person name="Dossat C."/>
            <person name="Karoui M.E."/>
            <person name="Frapy E."/>
            <person name="Garry L."/>
            <person name="Ghigo J.M."/>
            <person name="Gilles A.M."/>
            <person name="Johnson J."/>
            <person name="Le Bouguenec C."/>
            <person name="Lescat M."/>
            <person name="Mangenot S."/>
            <person name="Martinez-Jehanne V."/>
            <person name="Matic I."/>
            <person name="Nassif X."/>
            <person name="Oztas S."/>
            <person name="Petit M.A."/>
            <person name="Pichon C."/>
            <person name="Rouy Z."/>
            <person name="Ruf C.S."/>
            <person name="Schneider D."/>
            <person name="Tourret J."/>
            <person name="Vacherie B."/>
            <person name="Vallenet D."/>
            <person name="Medigue C."/>
            <person name="Rocha E.P.C."/>
            <person name="Denamur E."/>
        </authorList>
    </citation>
    <scope>NUCLEOTIDE SEQUENCE [LARGE SCALE GENOMIC DNA]</scope>
    <source>
        <strain>UMN026 / ExPEC</strain>
    </source>
</reference>
<comment type="function">
    <text evidence="1">Catalyzes the hydrolysis of N-succinyl-L,L-diaminopimelic acid (SDAP), forming succinate and LL-2,6-diaminopimelate (DAP), an intermediate involved in the bacterial biosynthesis of lysine and meso-diaminopimelic acid, an essential component of bacterial cell walls.</text>
</comment>
<comment type="catalytic activity">
    <reaction evidence="1">
        <text>N-succinyl-(2S,6S)-2,6-diaminopimelate + H2O = (2S,6S)-2,6-diaminopimelate + succinate</text>
        <dbReference type="Rhea" id="RHEA:22608"/>
        <dbReference type="ChEBI" id="CHEBI:15377"/>
        <dbReference type="ChEBI" id="CHEBI:30031"/>
        <dbReference type="ChEBI" id="CHEBI:57609"/>
        <dbReference type="ChEBI" id="CHEBI:58087"/>
        <dbReference type="EC" id="3.5.1.18"/>
    </reaction>
</comment>
<comment type="cofactor">
    <cofactor evidence="1">
        <name>Zn(2+)</name>
        <dbReference type="ChEBI" id="CHEBI:29105"/>
    </cofactor>
    <cofactor evidence="1">
        <name>Co(2+)</name>
        <dbReference type="ChEBI" id="CHEBI:48828"/>
    </cofactor>
    <text evidence="1">Binds 2 Zn(2+) or Co(2+) ions per subunit.</text>
</comment>
<comment type="pathway">
    <text evidence="1">Amino-acid biosynthesis; L-lysine biosynthesis via DAP pathway; LL-2,6-diaminopimelate from (S)-tetrahydrodipicolinate (succinylase route): step 3/3.</text>
</comment>
<comment type="subunit">
    <text evidence="1">Homodimer.</text>
</comment>
<comment type="similarity">
    <text evidence="1">Belongs to the peptidase M20A family. DapE subfamily.</text>
</comment>
<protein>
    <recommendedName>
        <fullName evidence="1">Succinyl-diaminopimelate desuccinylase</fullName>
        <shortName evidence="1">SDAP desuccinylase</shortName>
        <ecNumber evidence="1">3.5.1.18</ecNumber>
    </recommendedName>
    <alternativeName>
        <fullName evidence="1">N-succinyl-LL-2,6-diaminoheptanedioate amidohydrolase</fullName>
    </alternativeName>
</protein>
<organism>
    <name type="scientific">Escherichia coli O17:K52:H18 (strain UMN026 / ExPEC)</name>
    <dbReference type="NCBI Taxonomy" id="585056"/>
    <lineage>
        <taxon>Bacteria</taxon>
        <taxon>Pseudomonadati</taxon>
        <taxon>Pseudomonadota</taxon>
        <taxon>Gammaproteobacteria</taxon>
        <taxon>Enterobacterales</taxon>
        <taxon>Enterobacteriaceae</taxon>
        <taxon>Escherichia</taxon>
    </lineage>
</organism>
<gene>
    <name evidence="1" type="primary">dapE</name>
    <name type="ordered locus">ECUMN_2784</name>
</gene>
<keyword id="KW-0028">Amino-acid biosynthesis</keyword>
<keyword id="KW-0170">Cobalt</keyword>
<keyword id="KW-0220">Diaminopimelate biosynthesis</keyword>
<keyword id="KW-0378">Hydrolase</keyword>
<keyword id="KW-0457">Lysine biosynthesis</keyword>
<keyword id="KW-0479">Metal-binding</keyword>
<keyword id="KW-0862">Zinc</keyword>
<proteinExistence type="inferred from homology"/>
<dbReference type="EC" id="3.5.1.18" evidence="1"/>
<dbReference type="EMBL" id="CU928163">
    <property type="protein sequence ID" value="CAR13962.1"/>
    <property type="molecule type" value="Genomic_DNA"/>
</dbReference>
<dbReference type="RefSeq" id="WP_001277792.1">
    <property type="nucleotide sequence ID" value="NC_011751.1"/>
</dbReference>
<dbReference type="RefSeq" id="YP_002413489.1">
    <property type="nucleotide sequence ID" value="NC_011751.1"/>
</dbReference>
<dbReference type="SMR" id="B7N653"/>
<dbReference type="STRING" id="585056.ECUMN_2784"/>
<dbReference type="MEROPS" id="M20.010"/>
<dbReference type="KEGG" id="eum:ECUMN_2784"/>
<dbReference type="PATRIC" id="fig|585056.7.peg.2968"/>
<dbReference type="HOGENOM" id="CLU_021802_4_0_6"/>
<dbReference type="UniPathway" id="UPA00034">
    <property type="reaction ID" value="UER00021"/>
</dbReference>
<dbReference type="Proteomes" id="UP000007097">
    <property type="component" value="Chromosome"/>
</dbReference>
<dbReference type="GO" id="GO:0008777">
    <property type="term" value="F:acetylornithine deacetylase activity"/>
    <property type="evidence" value="ECO:0007669"/>
    <property type="project" value="TreeGrafter"/>
</dbReference>
<dbReference type="GO" id="GO:0050897">
    <property type="term" value="F:cobalt ion binding"/>
    <property type="evidence" value="ECO:0007669"/>
    <property type="project" value="UniProtKB-UniRule"/>
</dbReference>
<dbReference type="GO" id="GO:0009014">
    <property type="term" value="F:succinyl-diaminopimelate desuccinylase activity"/>
    <property type="evidence" value="ECO:0007669"/>
    <property type="project" value="UniProtKB-UniRule"/>
</dbReference>
<dbReference type="GO" id="GO:0008270">
    <property type="term" value="F:zinc ion binding"/>
    <property type="evidence" value="ECO:0007669"/>
    <property type="project" value="UniProtKB-UniRule"/>
</dbReference>
<dbReference type="GO" id="GO:0019877">
    <property type="term" value="P:diaminopimelate biosynthetic process"/>
    <property type="evidence" value="ECO:0007669"/>
    <property type="project" value="UniProtKB-UniRule"/>
</dbReference>
<dbReference type="GO" id="GO:0006526">
    <property type="term" value="P:L-arginine biosynthetic process"/>
    <property type="evidence" value="ECO:0007669"/>
    <property type="project" value="TreeGrafter"/>
</dbReference>
<dbReference type="GO" id="GO:0009089">
    <property type="term" value="P:lysine biosynthetic process via diaminopimelate"/>
    <property type="evidence" value="ECO:0007669"/>
    <property type="project" value="UniProtKB-UniRule"/>
</dbReference>
<dbReference type="CDD" id="cd03891">
    <property type="entry name" value="M20_DapE_proteobac"/>
    <property type="match status" value="1"/>
</dbReference>
<dbReference type="FunFam" id="3.30.70.360:FF:000011">
    <property type="entry name" value="Succinyl-diaminopimelate desuccinylase"/>
    <property type="match status" value="1"/>
</dbReference>
<dbReference type="FunFam" id="3.40.630.10:FF:000005">
    <property type="entry name" value="Succinyl-diaminopimelate desuccinylase"/>
    <property type="match status" value="1"/>
</dbReference>
<dbReference type="FunFam" id="3.40.630.10:FF:000010">
    <property type="entry name" value="Succinyl-diaminopimelate desuccinylase"/>
    <property type="match status" value="1"/>
</dbReference>
<dbReference type="Gene3D" id="3.40.630.10">
    <property type="entry name" value="Zn peptidases"/>
    <property type="match status" value="2"/>
</dbReference>
<dbReference type="HAMAP" id="MF_01690">
    <property type="entry name" value="DapE"/>
    <property type="match status" value="1"/>
</dbReference>
<dbReference type="InterPro" id="IPR001261">
    <property type="entry name" value="ArgE/DapE_CS"/>
</dbReference>
<dbReference type="InterPro" id="IPR036264">
    <property type="entry name" value="Bact_exopeptidase_dim_dom"/>
</dbReference>
<dbReference type="InterPro" id="IPR005941">
    <property type="entry name" value="DapE_proteobac"/>
</dbReference>
<dbReference type="InterPro" id="IPR002933">
    <property type="entry name" value="Peptidase_M20"/>
</dbReference>
<dbReference type="InterPro" id="IPR011650">
    <property type="entry name" value="Peptidase_M20_dimer"/>
</dbReference>
<dbReference type="InterPro" id="IPR050072">
    <property type="entry name" value="Peptidase_M20A"/>
</dbReference>
<dbReference type="NCBIfam" id="TIGR01246">
    <property type="entry name" value="dapE_proteo"/>
    <property type="match status" value="1"/>
</dbReference>
<dbReference type="NCBIfam" id="NF009557">
    <property type="entry name" value="PRK13009.1"/>
    <property type="match status" value="1"/>
</dbReference>
<dbReference type="PANTHER" id="PTHR43808">
    <property type="entry name" value="ACETYLORNITHINE DEACETYLASE"/>
    <property type="match status" value="1"/>
</dbReference>
<dbReference type="PANTHER" id="PTHR43808:SF31">
    <property type="entry name" value="N-ACETYL-L-CITRULLINE DEACETYLASE"/>
    <property type="match status" value="1"/>
</dbReference>
<dbReference type="Pfam" id="PF07687">
    <property type="entry name" value="M20_dimer"/>
    <property type="match status" value="1"/>
</dbReference>
<dbReference type="Pfam" id="PF01546">
    <property type="entry name" value="Peptidase_M20"/>
    <property type="match status" value="1"/>
</dbReference>
<dbReference type="SUPFAM" id="SSF55031">
    <property type="entry name" value="Bacterial exopeptidase dimerisation domain"/>
    <property type="match status" value="1"/>
</dbReference>
<dbReference type="SUPFAM" id="SSF53187">
    <property type="entry name" value="Zn-dependent exopeptidases"/>
    <property type="match status" value="1"/>
</dbReference>
<dbReference type="PROSITE" id="PS00758">
    <property type="entry name" value="ARGE_DAPE_CPG2_1"/>
    <property type="match status" value="1"/>
</dbReference>
<dbReference type="PROSITE" id="PS00759">
    <property type="entry name" value="ARGE_DAPE_CPG2_2"/>
    <property type="match status" value="1"/>
</dbReference>
<accession>B7N653</accession>
<evidence type="ECO:0000255" key="1">
    <source>
        <dbReference type="HAMAP-Rule" id="MF_01690"/>
    </source>
</evidence>
<sequence length="375" mass="41253">MSCPVIELTQQLIRRPSLSPDDAGCQALLIERLQAIGFTVERMDFADTQNFWAWRGQGETLAFAGHTDVVPPGDADRWINPPFEPTIRDGMLFGRGAADMKGSLAAMVVAAERFVAQHPNHAGRLAFLITSDEEASAHNGTVKVVEALMARNERLDYCLVGEPSSIEVVGDVVKNGRRGSLTCNLTIHGVQGHVAYPHLADNPVHRAAPFLNELVAIEWDQGNEFFPATSMQIANIQAGTGSNNVIPGELFVQFNFRFSTELTDEMIKAQVLALLEKHQLRYTVEWWLSGQPFLTARGKLVDAVVNAVEHYNEIKPQLLTTGGTSDGRFIARMGAQVVELGPVNATIHKINECVNAADLQLLARMYQRIMEQLVA</sequence>
<feature type="chain" id="PRO_0000375563" description="Succinyl-diaminopimelate desuccinylase">
    <location>
        <begin position="1"/>
        <end position="375"/>
    </location>
</feature>
<feature type="active site" evidence="1">
    <location>
        <position position="68"/>
    </location>
</feature>
<feature type="active site" description="Proton acceptor" evidence="1">
    <location>
        <position position="133"/>
    </location>
</feature>
<feature type="binding site" evidence="1">
    <location>
        <position position="66"/>
    </location>
    <ligand>
        <name>Zn(2+)</name>
        <dbReference type="ChEBI" id="CHEBI:29105"/>
        <label>1</label>
    </ligand>
</feature>
<feature type="binding site" evidence="1">
    <location>
        <position position="99"/>
    </location>
    <ligand>
        <name>Zn(2+)</name>
        <dbReference type="ChEBI" id="CHEBI:29105"/>
        <label>1</label>
    </ligand>
</feature>
<feature type="binding site" evidence="1">
    <location>
        <position position="99"/>
    </location>
    <ligand>
        <name>Zn(2+)</name>
        <dbReference type="ChEBI" id="CHEBI:29105"/>
        <label>2</label>
    </ligand>
</feature>
<feature type="binding site" evidence="1">
    <location>
        <position position="134"/>
    </location>
    <ligand>
        <name>Zn(2+)</name>
        <dbReference type="ChEBI" id="CHEBI:29105"/>
        <label>2</label>
    </ligand>
</feature>
<feature type="binding site" evidence="1">
    <location>
        <position position="162"/>
    </location>
    <ligand>
        <name>Zn(2+)</name>
        <dbReference type="ChEBI" id="CHEBI:29105"/>
        <label>1</label>
    </ligand>
</feature>
<feature type="binding site" evidence="1">
    <location>
        <position position="348"/>
    </location>
    <ligand>
        <name>Zn(2+)</name>
        <dbReference type="ChEBI" id="CHEBI:29105"/>
        <label>2</label>
    </ligand>
</feature>
<name>DAPE_ECOLU</name>